<name>FCPF_MACPY</name>
<reference key="1">
    <citation type="journal article" date="1995" name="Mol. Gen. Genet.">
        <title>The gene family encoding the fucoxanthin chlorophyll proteins from the brown alga Macrocystis pyrifera.</title>
        <authorList>
            <person name="Apt K.E."/>
            <person name="Clendennen S.K."/>
            <person name="Powers D.A."/>
            <person name="Grossman A.R."/>
        </authorList>
    </citation>
    <scope>NUCLEOTIDE SEQUENCE [MRNA]</scope>
    <source>
        <strain>MAL-1</strain>
    </source>
</reference>
<protein>
    <recommendedName>
        <fullName>Fucoxanthin-chlorophyll a-c binding protein F, chloroplastic</fullName>
    </recommendedName>
</protein>
<evidence type="ECO:0000255" key="1"/>
<evidence type="ECO:0000305" key="2"/>
<keyword id="KW-0148">Chlorophyll</keyword>
<keyword id="KW-0150">Chloroplast</keyword>
<keyword id="KW-0157">Chromophore</keyword>
<keyword id="KW-0437">Light-harvesting polypeptide</keyword>
<keyword id="KW-0472">Membrane</keyword>
<keyword id="KW-0602">Photosynthesis</keyword>
<keyword id="KW-0604">Photosystem II</keyword>
<keyword id="KW-0934">Plastid</keyword>
<keyword id="KW-0793">Thylakoid</keyword>
<keyword id="KW-0809">Transit peptide</keyword>
<keyword id="KW-0812">Transmembrane</keyword>
<keyword id="KW-1133">Transmembrane helix</keyword>
<proteinExistence type="evidence at transcript level"/>
<accession>Q40300</accession>
<organism>
    <name type="scientific">Macrocystis pyrifera</name>
    <name type="common">Giant kelp</name>
    <name type="synonym">Fucus pyrifer</name>
    <dbReference type="NCBI Taxonomy" id="35122"/>
    <lineage>
        <taxon>Eukaryota</taxon>
        <taxon>Sar</taxon>
        <taxon>Stramenopiles</taxon>
        <taxon>Ochrophyta</taxon>
        <taxon>PX clade</taxon>
        <taxon>Phaeophyceae</taxon>
        <taxon>Laminariales</taxon>
        <taxon>Laminariaceae</taxon>
        <taxon>Macrocystis</taxon>
    </lineage>
</organism>
<gene>
    <name type="primary">FCPF</name>
</gene>
<comment type="function">
    <text>The light-harvesting complex (LHC) functions as a light receptor, it captures and delivers excitation energy to photosystems with which it is closely associated. Energy is transferred from the carotenoid and chlorophyll C (or B) to chlorophyll A and the photosynthetic reaction centers where it is used to synthesize ATP and reducing power.</text>
</comment>
<comment type="subunit">
    <text>The LHC complex of chromophytic algae is composed of fucoxanthin, chlorophyll A and C bound non-covalently by fucoxanthin chlorophyll proteins (FCPs). The ratio of pigments in this LHC is; fucoxanthin: chlorophyll C: chlorophyll A; (0.6-1): (0.1-0.3): (1).</text>
</comment>
<comment type="subcellular location">
    <subcellularLocation>
        <location>Plastid</location>
        <location>Chloroplast thylakoid membrane</location>
        <topology>Multi-pass membrane protein</topology>
    </subcellularLocation>
    <text>FCPs are probably transported across the endoplasmic reticulum membranes that surround the plastid via a signal peptide, followed by translocation across the thylakoid membrane via a transit peptide.</text>
</comment>
<comment type="induction">
    <text>Levels are increased up to tenfold when transferred from high intensity to low intensity blue or white light.</text>
</comment>
<comment type="similarity">
    <text evidence="2">Belongs to the fucoxanthin chlorophyll protein family.</text>
</comment>
<sequence>AIACAAAPGLRGPSAFNGAALSTPAKSSSAMKMSFESEIGAQAPLGFWDPLGLLADADQERFERLRYVEVKHGRIAMLAIAGHLTQQNTRLPGMLSNSANLSFADMPNGVAALSKIPPGGLAQIFGFIGFLELAVMKNVEGSFPGDFIIGGNPFASSWDSMSSETQASKRAIELNNGRAAQMGILGMMVHEELSNQPYITNDLLGASYTFN</sequence>
<dbReference type="EMBL" id="U10068">
    <property type="protein sequence ID" value="AAC49021.1"/>
    <property type="molecule type" value="mRNA"/>
</dbReference>
<dbReference type="PIR" id="S53824">
    <property type="entry name" value="S53824"/>
</dbReference>
<dbReference type="SMR" id="Q40300"/>
<dbReference type="GO" id="GO:0009535">
    <property type="term" value="C:chloroplast thylakoid membrane"/>
    <property type="evidence" value="ECO:0007669"/>
    <property type="project" value="UniProtKB-SubCell"/>
</dbReference>
<dbReference type="GO" id="GO:0030076">
    <property type="term" value="C:light-harvesting complex"/>
    <property type="evidence" value="ECO:0007669"/>
    <property type="project" value="UniProtKB-KW"/>
</dbReference>
<dbReference type="GO" id="GO:0009523">
    <property type="term" value="C:photosystem II"/>
    <property type="evidence" value="ECO:0007669"/>
    <property type="project" value="UniProtKB-KW"/>
</dbReference>
<dbReference type="GO" id="GO:0016168">
    <property type="term" value="F:chlorophyll binding"/>
    <property type="evidence" value="ECO:0007669"/>
    <property type="project" value="UniProtKB-KW"/>
</dbReference>
<dbReference type="GO" id="GO:0009765">
    <property type="term" value="P:photosynthesis, light harvesting"/>
    <property type="evidence" value="ECO:0007669"/>
    <property type="project" value="InterPro"/>
</dbReference>
<dbReference type="Gene3D" id="1.10.3460.10">
    <property type="entry name" value="Chlorophyll a/b binding protein domain"/>
    <property type="match status" value="1"/>
</dbReference>
<dbReference type="InterPro" id="IPR001344">
    <property type="entry name" value="Chloro_AB-bd_pln"/>
</dbReference>
<dbReference type="InterPro" id="IPR022796">
    <property type="entry name" value="Chloroa_b-bind"/>
</dbReference>
<dbReference type="PANTHER" id="PTHR21649">
    <property type="entry name" value="CHLOROPHYLL A/B BINDING PROTEIN"/>
    <property type="match status" value="1"/>
</dbReference>
<dbReference type="Pfam" id="PF00504">
    <property type="entry name" value="Chloroa_b-bind"/>
    <property type="match status" value="1"/>
</dbReference>
<dbReference type="SUPFAM" id="SSF103511">
    <property type="entry name" value="Chlorophyll a-b binding protein"/>
    <property type="match status" value="1"/>
</dbReference>
<feature type="transit peptide" description="Chloroplast" evidence="2">
    <location>
        <begin position="1" status="less than"/>
        <end position="33"/>
    </location>
</feature>
<feature type="chain" id="PRO_0000021243" description="Fucoxanthin-chlorophyll a-c binding protein F, chloroplastic">
    <location>
        <begin position="34"/>
        <end position="211"/>
    </location>
</feature>
<feature type="transmembrane region" description="Helical" evidence="1">
    <location>
        <begin position="75"/>
        <end position="95"/>
    </location>
</feature>
<feature type="transmembrane region" description="Helical" evidence="1">
    <location>
        <begin position="116"/>
        <end position="136"/>
    </location>
</feature>
<feature type="transmembrane region" description="Helical" evidence="1">
    <location>
        <begin position="177"/>
        <end position="197"/>
    </location>
</feature>
<feature type="non-terminal residue">
    <location>
        <position position="1"/>
    </location>
</feature>